<keyword id="KW-0240">DNA-directed RNA polymerase</keyword>
<keyword id="KW-0548">Nucleotidyltransferase</keyword>
<keyword id="KW-0804">Transcription</keyword>
<keyword id="KW-0808">Transferase</keyword>
<proteinExistence type="inferred from homology"/>
<reference key="1">
    <citation type="journal article" date="2003" name="Nature">
        <title>The genome of a motile marine Synechococcus.</title>
        <authorList>
            <person name="Palenik B."/>
            <person name="Brahamsha B."/>
            <person name="Larimer F.W."/>
            <person name="Land M.L."/>
            <person name="Hauser L."/>
            <person name="Chain P."/>
            <person name="Lamerdin J.E."/>
            <person name="Regala W."/>
            <person name="Allen E.E."/>
            <person name="McCarren J."/>
            <person name="Paulsen I.T."/>
            <person name="Dufresne A."/>
            <person name="Partensky F."/>
            <person name="Webb E.A."/>
            <person name="Waterbury J."/>
        </authorList>
    </citation>
    <scope>NUCLEOTIDE SEQUENCE [LARGE SCALE GENOMIC DNA]</scope>
    <source>
        <strain>WH8102</strain>
    </source>
</reference>
<organism>
    <name type="scientific">Parasynechococcus marenigrum (strain WH8102)</name>
    <dbReference type="NCBI Taxonomy" id="84588"/>
    <lineage>
        <taxon>Bacteria</taxon>
        <taxon>Bacillati</taxon>
        <taxon>Cyanobacteriota</taxon>
        <taxon>Cyanophyceae</taxon>
        <taxon>Synechococcales</taxon>
        <taxon>Prochlorococcaceae</taxon>
        <taxon>Parasynechococcus</taxon>
        <taxon>Parasynechococcus marenigrum</taxon>
    </lineage>
</organism>
<sequence>MSSSAIQVAKTATYLPDLVEVQRASFKWFLDLGLIEELESFSPITDYTGKLELHFIGSEYRLKRPRHDVEEAKRRDATFASQMYVTCRLVNKETGEIKEQEVFIGELPLMTERGTFIINGAERVIVNQIVRSPGVYFKDEMDKNGRRTYNASVIPNRGAWLKFETDKNSLLHVRVDKTRKINAHVLMRAMGLSDNDVLDKLRHPEFYKKSIDAANDEGISSEDQALLELYKKLRPGEPPSVSGGQQLLQTRFFDPKRYDLGRVGRYKINKKLRLTIPDTVRTLTHEDVLSTLDYLINLELDVGGASLDDIDHLGNRRVRSVGELLQNQVRVGLNRLERIIKERMTVGETDSLTPAQLVNPKPLVAAIKEFFGSSQLSQFMDQTNPLAELTHKRRISALGPGGLTRERAGFAVRDIHPSHYGRLCPIETPEGPNAGLINSLATHARVNEYGFIETPFWKVENGVVIKDGDPIYLSADREDEVRVAPGDVATESDGRIKADLIPVRYRQDFEKVPPEQVDYVALSPVQVISVAASLIPFLEHDDANRALMGSNMQRQAVPLLRPERALVGTGLETQVARDSGMVPISRVNGTVIFVDATAIVVQDEDGQEHTHYLQKYQRSNQDTCLNHRPIVRCGDQVIVGQVMADGSACEGGEIALGQNVLIAYMPWEGYNFEDALLVSERLVTDDLYTSVHIEKYEIEARQTKLGPEEITREIPNVAEESLGNLDEMGIIRVGAFVESGDILVGKVTPKGESDQPPEEKLLRAIFGEKARDVRDNSLRVPGTERGRVVDVRIYTREQGDELPPGANMVVRVYVAQRRKIQVGDKMAGRHGNKGIISRILPREDMPYLPDGTPVDICLNPLGVPSRMNVGQVFELLMGWAASNLDSRVRIVPFDEMHGAEMSQETCEAFLKEAAKQPGKAWVYNPDDPGKLVLRDGRTGQPFDQPVAVGYSHFLKLVHLVDDKIHARSTGPYSLVTQQPLGGKAQQGGQRLGEMEVWALEAYGAAYTLQELLTVKSDDMQGRNEALNAIVKGKPIPRPGTPESFKVLMRELQSLGLDIAVYTDEGKEVDLMQDVNPRRSTPSRPTYESLGVADYDED</sequence>
<name>RPOB_PARMW</name>
<feature type="chain" id="PRO_0000047981" description="DNA-directed RNA polymerase subunit beta">
    <location>
        <begin position="1"/>
        <end position="1097"/>
    </location>
</feature>
<feature type="region of interest" description="Disordered" evidence="2">
    <location>
        <begin position="1072"/>
        <end position="1097"/>
    </location>
</feature>
<comment type="function">
    <text evidence="1">DNA-dependent RNA polymerase catalyzes the transcription of DNA into RNA using the four ribonucleoside triphosphates as substrates.</text>
</comment>
<comment type="catalytic activity">
    <reaction evidence="1">
        <text>RNA(n) + a ribonucleoside 5'-triphosphate = RNA(n+1) + diphosphate</text>
        <dbReference type="Rhea" id="RHEA:21248"/>
        <dbReference type="Rhea" id="RHEA-COMP:14527"/>
        <dbReference type="Rhea" id="RHEA-COMP:17342"/>
        <dbReference type="ChEBI" id="CHEBI:33019"/>
        <dbReference type="ChEBI" id="CHEBI:61557"/>
        <dbReference type="ChEBI" id="CHEBI:140395"/>
        <dbReference type="EC" id="2.7.7.6"/>
    </reaction>
</comment>
<comment type="subunit">
    <text evidence="1">In cyanobacteria the RNAP catalytic core is composed of 2 alpha, 1 beta, 1 beta', 1 gamma and 1 omega subunit. When a sigma factor is associated with the core the holoenzyme is formed, which can initiate transcription.</text>
</comment>
<comment type="similarity">
    <text evidence="1">Belongs to the RNA polymerase beta chain family.</text>
</comment>
<accession>Q7U8K4</accession>
<evidence type="ECO:0000255" key="1">
    <source>
        <dbReference type="HAMAP-Rule" id="MF_01321"/>
    </source>
</evidence>
<evidence type="ECO:0000256" key="2">
    <source>
        <dbReference type="SAM" id="MobiDB-lite"/>
    </source>
</evidence>
<protein>
    <recommendedName>
        <fullName evidence="1">DNA-directed RNA polymerase subunit beta</fullName>
        <shortName evidence="1">RNAP subunit beta</shortName>
        <ecNumber evidence="1">2.7.7.6</ecNumber>
    </recommendedName>
    <alternativeName>
        <fullName evidence="1">RNA polymerase subunit beta</fullName>
    </alternativeName>
    <alternativeName>
        <fullName evidence="1">Transcriptase subunit beta</fullName>
    </alternativeName>
</protein>
<dbReference type="EC" id="2.7.7.6" evidence="1"/>
<dbReference type="EMBL" id="BX569690">
    <property type="protein sequence ID" value="CAE07128.1"/>
    <property type="molecule type" value="Genomic_DNA"/>
</dbReference>
<dbReference type="RefSeq" id="WP_011127480.1">
    <property type="nucleotide sequence ID" value="NC_005070.1"/>
</dbReference>
<dbReference type="SMR" id="Q7U8K4"/>
<dbReference type="STRING" id="84588.SYNW0613"/>
<dbReference type="KEGG" id="syw:SYNW0613"/>
<dbReference type="eggNOG" id="COG0085">
    <property type="taxonomic scope" value="Bacteria"/>
</dbReference>
<dbReference type="HOGENOM" id="CLU_000524_4_1_3"/>
<dbReference type="Proteomes" id="UP000001422">
    <property type="component" value="Chromosome"/>
</dbReference>
<dbReference type="GO" id="GO:0000428">
    <property type="term" value="C:DNA-directed RNA polymerase complex"/>
    <property type="evidence" value="ECO:0007669"/>
    <property type="project" value="UniProtKB-KW"/>
</dbReference>
<dbReference type="GO" id="GO:0003677">
    <property type="term" value="F:DNA binding"/>
    <property type="evidence" value="ECO:0007669"/>
    <property type="project" value="UniProtKB-UniRule"/>
</dbReference>
<dbReference type="GO" id="GO:0003899">
    <property type="term" value="F:DNA-directed RNA polymerase activity"/>
    <property type="evidence" value="ECO:0007669"/>
    <property type="project" value="UniProtKB-UniRule"/>
</dbReference>
<dbReference type="GO" id="GO:0032549">
    <property type="term" value="F:ribonucleoside binding"/>
    <property type="evidence" value="ECO:0007669"/>
    <property type="project" value="InterPro"/>
</dbReference>
<dbReference type="GO" id="GO:0006351">
    <property type="term" value="P:DNA-templated transcription"/>
    <property type="evidence" value="ECO:0007669"/>
    <property type="project" value="UniProtKB-UniRule"/>
</dbReference>
<dbReference type="CDD" id="cd00653">
    <property type="entry name" value="RNA_pol_B_RPB2"/>
    <property type="match status" value="1"/>
</dbReference>
<dbReference type="FunFam" id="3.90.1800.10:FF:000001">
    <property type="entry name" value="DNA-directed RNA polymerase subunit beta"/>
    <property type="match status" value="1"/>
</dbReference>
<dbReference type="Gene3D" id="2.40.50.100">
    <property type="match status" value="1"/>
</dbReference>
<dbReference type="Gene3D" id="2.40.50.150">
    <property type="match status" value="1"/>
</dbReference>
<dbReference type="Gene3D" id="3.90.1100.10">
    <property type="match status" value="1"/>
</dbReference>
<dbReference type="Gene3D" id="2.30.150.10">
    <property type="entry name" value="DNA-directed RNA polymerase, beta subunit, external 1 domain"/>
    <property type="match status" value="1"/>
</dbReference>
<dbReference type="Gene3D" id="2.40.270.10">
    <property type="entry name" value="DNA-directed RNA polymerase, subunit 2, domain 6"/>
    <property type="match status" value="1"/>
</dbReference>
<dbReference type="Gene3D" id="3.90.1800.10">
    <property type="entry name" value="RNA polymerase alpha subunit dimerisation domain"/>
    <property type="match status" value="1"/>
</dbReference>
<dbReference type="Gene3D" id="3.90.1110.10">
    <property type="entry name" value="RNA polymerase Rpb2, domain 2"/>
    <property type="match status" value="1"/>
</dbReference>
<dbReference type="HAMAP" id="MF_01321">
    <property type="entry name" value="RNApol_bact_RpoB"/>
    <property type="match status" value="1"/>
</dbReference>
<dbReference type="InterPro" id="IPR042107">
    <property type="entry name" value="DNA-dir_RNA_pol_bsu_ext_1_sf"/>
</dbReference>
<dbReference type="InterPro" id="IPR019462">
    <property type="entry name" value="DNA-dir_RNA_pol_bsu_external_1"/>
</dbReference>
<dbReference type="InterPro" id="IPR015712">
    <property type="entry name" value="DNA-dir_RNA_pol_su2"/>
</dbReference>
<dbReference type="InterPro" id="IPR007120">
    <property type="entry name" value="DNA-dir_RNAP_su2_dom"/>
</dbReference>
<dbReference type="InterPro" id="IPR037033">
    <property type="entry name" value="DNA-dir_RNAP_su2_hyb_sf"/>
</dbReference>
<dbReference type="InterPro" id="IPR010243">
    <property type="entry name" value="RNA_pol_bsu_bac"/>
</dbReference>
<dbReference type="InterPro" id="IPR007121">
    <property type="entry name" value="RNA_pol_bsu_CS"/>
</dbReference>
<dbReference type="InterPro" id="IPR007644">
    <property type="entry name" value="RNA_pol_bsu_protrusion"/>
</dbReference>
<dbReference type="InterPro" id="IPR007642">
    <property type="entry name" value="RNA_pol_Rpb2_2"/>
</dbReference>
<dbReference type="InterPro" id="IPR037034">
    <property type="entry name" value="RNA_pol_Rpb2_2_sf"/>
</dbReference>
<dbReference type="InterPro" id="IPR007645">
    <property type="entry name" value="RNA_pol_Rpb2_3"/>
</dbReference>
<dbReference type="InterPro" id="IPR007641">
    <property type="entry name" value="RNA_pol_Rpb2_7"/>
</dbReference>
<dbReference type="InterPro" id="IPR014724">
    <property type="entry name" value="RNA_pol_RPB2_OB-fold"/>
</dbReference>
<dbReference type="NCBIfam" id="NF001616">
    <property type="entry name" value="PRK00405.1"/>
    <property type="match status" value="1"/>
</dbReference>
<dbReference type="NCBIfam" id="TIGR02013">
    <property type="entry name" value="rpoB"/>
    <property type="match status" value="1"/>
</dbReference>
<dbReference type="PANTHER" id="PTHR20856">
    <property type="entry name" value="DNA-DIRECTED RNA POLYMERASE I SUBUNIT 2"/>
    <property type="match status" value="1"/>
</dbReference>
<dbReference type="Pfam" id="PF04563">
    <property type="entry name" value="RNA_pol_Rpb2_1"/>
    <property type="match status" value="1"/>
</dbReference>
<dbReference type="Pfam" id="PF04561">
    <property type="entry name" value="RNA_pol_Rpb2_2"/>
    <property type="match status" value="1"/>
</dbReference>
<dbReference type="Pfam" id="PF04565">
    <property type="entry name" value="RNA_pol_Rpb2_3"/>
    <property type="match status" value="1"/>
</dbReference>
<dbReference type="Pfam" id="PF10385">
    <property type="entry name" value="RNA_pol_Rpb2_45"/>
    <property type="match status" value="1"/>
</dbReference>
<dbReference type="Pfam" id="PF00562">
    <property type="entry name" value="RNA_pol_Rpb2_6"/>
    <property type="match status" value="1"/>
</dbReference>
<dbReference type="Pfam" id="PF04560">
    <property type="entry name" value="RNA_pol_Rpb2_7"/>
    <property type="match status" value="1"/>
</dbReference>
<dbReference type="SUPFAM" id="SSF64484">
    <property type="entry name" value="beta and beta-prime subunits of DNA dependent RNA-polymerase"/>
    <property type="match status" value="1"/>
</dbReference>
<dbReference type="PROSITE" id="PS01166">
    <property type="entry name" value="RNA_POL_BETA"/>
    <property type="match status" value="1"/>
</dbReference>
<gene>
    <name evidence="1" type="primary">rpoB</name>
    <name type="ordered locus">SYNW0613</name>
</gene>